<comment type="subcellular location">
    <subcellularLocation>
        <location evidence="2">Secreted</location>
    </subcellularLocation>
</comment>
<comment type="tissue specificity">
    <text evidence="2">Expressed by the skin glands.</text>
</comment>
<comment type="mass spectrometry" mass="1594.6" method="MALDI" evidence="2"/>
<comment type="similarity">
    <text evidence="1">Belongs to the frog skin active peptide (FSAP) family. Tryptophillin subfamily.</text>
</comment>
<reference evidence="4" key="1">
    <citation type="journal article" date="2011" name="Toxicon">
        <title>Peptidomic dissection of the skin secretion of Phasmahyla jandaia (Bokermann and Sazima, 1978) (Anura, Hylidae, Phyllomedusinae).</title>
        <authorList>
            <person name="Rates B."/>
            <person name="Silva L.P."/>
            <person name="Ireno I.C."/>
            <person name="Leite F.S."/>
            <person name="Borges M.H."/>
            <person name="Bloch C. Jr."/>
            <person name="De Lima M.E."/>
            <person name="Pimenta A.M."/>
        </authorList>
    </citation>
    <scope>PROTEIN SEQUENCE</scope>
    <scope>SUBCELLULAR LOCATION</scope>
    <scope>TISSUE SPECIFICITY</scope>
    <scope>MASS SPECTROMETRY</scope>
    <scope>PYROGLUTAMATE FORMATION AT GLN-1</scope>
    <source>
        <tissue evidence="2">Skin secretion</tissue>
    </source>
</reference>
<feature type="peptide" id="PRO_0000404628" description="Tryptophyllin-T3-2" evidence="2">
    <location>
        <begin position="1"/>
        <end position="13"/>
    </location>
</feature>
<feature type="modified residue" description="Pyrrolidone carboxylic acid" evidence="2">
    <location>
        <position position="1"/>
    </location>
</feature>
<feature type="unsure residue" description="K or Q" evidence="2">
    <location>
        <position position="3"/>
    </location>
</feature>
<feature type="unsure residue" description="I or L" evidence="2">
    <location>
        <position position="10"/>
    </location>
</feature>
<evidence type="ECO:0000255" key="1"/>
<evidence type="ECO:0000269" key="2">
    <source>
    </source>
</evidence>
<evidence type="ECO:0000303" key="3">
    <source>
    </source>
</evidence>
<evidence type="ECO:0000305" key="4"/>
<proteinExistence type="evidence at protein level"/>
<organism>
    <name type="scientific">Phasmahyla jandaia</name>
    <name type="common">Jandaia leaf frog</name>
    <name type="synonym">Phyllomedusa jandaia</name>
    <dbReference type="NCBI Taxonomy" id="762504"/>
    <lineage>
        <taxon>Eukaryota</taxon>
        <taxon>Metazoa</taxon>
        <taxon>Chordata</taxon>
        <taxon>Craniata</taxon>
        <taxon>Vertebrata</taxon>
        <taxon>Euteleostomi</taxon>
        <taxon>Amphibia</taxon>
        <taxon>Batrachia</taxon>
        <taxon>Anura</taxon>
        <taxon>Neobatrachia</taxon>
        <taxon>Hyloidea</taxon>
        <taxon>Hylidae</taxon>
        <taxon>Phyllomedusinae</taxon>
        <taxon>Phasmahyla</taxon>
    </lineage>
</organism>
<accession>P86611</accession>
<keyword id="KW-0878">Amphibian defense peptide</keyword>
<keyword id="KW-0903">Direct protein sequencing</keyword>
<keyword id="KW-0873">Pyrrolidone carboxylic acid</keyword>
<keyword id="KW-0964">Secreted</keyword>
<dbReference type="GO" id="GO:0005576">
    <property type="term" value="C:extracellular region"/>
    <property type="evidence" value="ECO:0007669"/>
    <property type="project" value="UniProtKB-SubCell"/>
</dbReference>
<dbReference type="GO" id="GO:0006952">
    <property type="term" value="P:defense response"/>
    <property type="evidence" value="ECO:0007669"/>
    <property type="project" value="UniProtKB-KW"/>
</dbReference>
<dbReference type="InterPro" id="IPR013266">
    <property type="entry name" value="Tryptophillin"/>
</dbReference>
<dbReference type="Pfam" id="PF08248">
    <property type="entry name" value="Tryp_FSAP"/>
    <property type="match status" value="1"/>
</dbReference>
<name>TY32_PHAJA</name>
<sequence length="13" mass="1612">QDKPFWSPPIYPH</sequence>
<protein>
    <recommendedName>
        <fullName>Tryptophyllin-T3-2</fullName>
        <shortName evidence="3">Pj-T3-2</shortName>
    </recommendedName>
</protein>